<sequence>MPNETLHIDIGVCTYRRPELAETLRSLAAMNVPERARLRVIVADNDAEPSARALVEGLRPEMPFDILYVHCPHSNISIARNCCLDNSTGDFLAFLDDDETVSGDWLTRLLETARTTGAAAVLGPVRAHYGPTAPRWMRSGDFHSTLPVWAKGEIRTGYTCNALLRRDAASLLGRRFKLSLGKSGGEDTDFFTGMHCAGGTIAFSPEAWVHEPVPENRASLAWLAKRRFRSGQTHGRLLAEKAHGLRQAWNIALAGAKSGFCATAAVLCFPSAARRNRFALRAVLHAGVISGLLGLKEIEQYGAREVTSA</sequence>
<geneLocation type="plasmid">
    <name>pSymB</name>
    <name>megaplasmid 2</name>
</geneLocation>
<reference key="1">
    <citation type="journal article" date="1993" name="J. Bacteriol.">
        <title>Family of glycosyl transferases needed for the synthesis of succinoglycan by Rhizobium meliloti.</title>
        <authorList>
            <person name="Glucksmann M.A."/>
            <person name="Reuber T.L."/>
            <person name="Walker G.C."/>
        </authorList>
    </citation>
    <scope>NUCLEOTIDE SEQUENCE [GENOMIC DNA]</scope>
    <source>
        <strain>1021</strain>
    </source>
</reference>
<reference key="2">
    <citation type="journal article" date="1993" name="Mol. Gen. Genet.">
        <title>Identification and analysis of the Rhizobium meliloti exoAMONP genes involved in exopolysaccharide biosynthesis and mapping of promoters located on the exoHKLAMONP fragment.</title>
        <authorList>
            <person name="Becker A."/>
            <person name="Kleickmann A."/>
            <person name="Keller M."/>
            <person name="Arnold W."/>
            <person name="Puehler A."/>
        </authorList>
    </citation>
    <scope>NUCLEOTIDE SEQUENCE [GENOMIC DNA]</scope>
    <source>
        <strain>RCR2011 / SU47</strain>
    </source>
</reference>
<reference key="3">
    <citation type="journal article" date="2001" name="Proc. Natl. Acad. Sci. U.S.A.">
        <title>The complete sequence of the 1,683-kb pSymB megaplasmid from the N2-fixing endosymbiont Sinorhizobium meliloti.</title>
        <authorList>
            <person name="Finan T.M."/>
            <person name="Weidner S."/>
            <person name="Wong K."/>
            <person name="Buhrmester J."/>
            <person name="Chain P."/>
            <person name="Vorhoelter F.J."/>
            <person name="Hernandez-Lucas I."/>
            <person name="Becker A."/>
            <person name="Cowie A."/>
            <person name="Gouzy J."/>
            <person name="Golding B."/>
            <person name="Puehler A."/>
        </authorList>
    </citation>
    <scope>NUCLEOTIDE SEQUENCE [LARGE SCALE GENOMIC DNA]</scope>
    <source>
        <strain>1021</strain>
    </source>
</reference>
<reference key="4">
    <citation type="journal article" date="2001" name="Science">
        <title>The composite genome of the legume symbiont Sinorhizobium meliloti.</title>
        <authorList>
            <person name="Galibert F."/>
            <person name="Finan T.M."/>
            <person name="Long S.R."/>
            <person name="Puehler A."/>
            <person name="Abola P."/>
            <person name="Ampe F."/>
            <person name="Barloy-Hubler F."/>
            <person name="Barnett M.J."/>
            <person name="Becker A."/>
            <person name="Boistard P."/>
            <person name="Bothe G."/>
            <person name="Boutry M."/>
            <person name="Bowser L."/>
            <person name="Buhrmester J."/>
            <person name="Cadieu E."/>
            <person name="Capela D."/>
            <person name="Chain P."/>
            <person name="Cowie A."/>
            <person name="Davis R.W."/>
            <person name="Dreano S."/>
            <person name="Federspiel N.A."/>
            <person name="Fisher R.F."/>
            <person name="Gloux S."/>
            <person name="Godrie T."/>
            <person name="Goffeau A."/>
            <person name="Golding B."/>
            <person name="Gouzy J."/>
            <person name="Gurjal M."/>
            <person name="Hernandez-Lucas I."/>
            <person name="Hong A."/>
            <person name="Huizar L."/>
            <person name="Hyman R.W."/>
            <person name="Jones T."/>
            <person name="Kahn D."/>
            <person name="Kahn M.L."/>
            <person name="Kalman S."/>
            <person name="Keating D.H."/>
            <person name="Kiss E."/>
            <person name="Komp C."/>
            <person name="Lelaure V."/>
            <person name="Masuy D."/>
            <person name="Palm C."/>
            <person name="Peck M.C."/>
            <person name="Pohl T.M."/>
            <person name="Portetelle D."/>
            <person name="Purnelle B."/>
            <person name="Ramsperger U."/>
            <person name="Surzycki R."/>
            <person name="Thebault P."/>
            <person name="Vandenbol M."/>
            <person name="Vorhoelter F.J."/>
            <person name="Weidner S."/>
            <person name="Wells D.H."/>
            <person name="Wong K."/>
            <person name="Yeh K.-C."/>
            <person name="Batut J."/>
        </authorList>
    </citation>
    <scope>NUCLEOTIDE SEQUENCE [LARGE SCALE GENOMIC DNA]</scope>
    <source>
        <strain>1021</strain>
    </source>
</reference>
<evidence type="ECO:0000305" key="1"/>
<comment type="function">
    <text>Glycosyltransferase required for the synthesis of succinoglycan (EPS I). Needed for the addition of the fourth sugar (glucose), catalyzes the formation of a beta-1,4 linkage between the third acetylated sugar and the fourth sugar.</text>
</comment>
<comment type="pathway">
    <text>Glycan metabolism; exopolysaccharide biosynthesis.</text>
</comment>
<comment type="subcellular location">
    <subcellularLocation>
        <location>Cell inner membrane</location>
        <topology>Peripheral membrane protein</topology>
    </subcellularLocation>
</comment>
<comment type="similarity">
    <text evidence="1">Belongs to the glycosyltransferase 2 family.</text>
</comment>
<organism>
    <name type="scientific">Rhizobium meliloti (strain 1021)</name>
    <name type="common">Ensifer meliloti</name>
    <name type="synonym">Sinorhizobium meliloti</name>
    <dbReference type="NCBI Taxonomy" id="266834"/>
    <lineage>
        <taxon>Bacteria</taxon>
        <taxon>Pseudomonadati</taxon>
        <taxon>Pseudomonadota</taxon>
        <taxon>Alphaproteobacteria</taxon>
        <taxon>Hyphomicrobiales</taxon>
        <taxon>Rhizobiaceae</taxon>
        <taxon>Sinorhizobium/Ensifer group</taxon>
        <taxon>Sinorhizobium</taxon>
    </lineage>
</organism>
<name>EXOM_RHIME</name>
<keyword id="KW-0997">Cell inner membrane</keyword>
<keyword id="KW-1003">Cell membrane</keyword>
<keyword id="KW-0270">Exopolysaccharide synthesis</keyword>
<keyword id="KW-0328">Glycosyltransferase</keyword>
<keyword id="KW-0472">Membrane</keyword>
<keyword id="KW-0614">Plasmid</keyword>
<keyword id="KW-1185">Reference proteome</keyword>
<keyword id="KW-0808">Transferase</keyword>
<accession>P33695</accession>
<proteinExistence type="inferred from homology"/>
<gene>
    <name type="primary">exoM</name>
    <name type="ordered locus">RB1083</name>
    <name type="ORF">SMb20958</name>
</gene>
<dbReference type="EC" id="2.4.-.-"/>
<dbReference type="EMBL" id="L20758">
    <property type="protein sequence ID" value="AAA16045.1"/>
    <property type="molecule type" value="Unassigned_DNA"/>
</dbReference>
<dbReference type="EMBL" id="Z22636">
    <property type="protein sequence ID" value="CAA80346.1"/>
    <property type="molecule type" value="Genomic_DNA"/>
</dbReference>
<dbReference type="EMBL" id="AL591985">
    <property type="protein sequence ID" value="CAC49483.1"/>
    <property type="molecule type" value="Genomic_DNA"/>
</dbReference>
<dbReference type="PIR" id="C95977">
    <property type="entry name" value="C95977"/>
</dbReference>
<dbReference type="PIR" id="S37028">
    <property type="entry name" value="S37028"/>
</dbReference>
<dbReference type="PIR" id="S39957">
    <property type="entry name" value="S39957"/>
</dbReference>
<dbReference type="RefSeq" id="NP_437623.1">
    <property type="nucleotide sequence ID" value="NC_003078.1"/>
</dbReference>
<dbReference type="RefSeq" id="WP_010975919.1">
    <property type="nucleotide sequence ID" value="NC_003078.1"/>
</dbReference>
<dbReference type="SMR" id="P33695"/>
<dbReference type="CAZy" id="GT2">
    <property type="family name" value="Glycosyltransferase Family 2"/>
</dbReference>
<dbReference type="EnsemblBacteria" id="CAC49483">
    <property type="protein sequence ID" value="CAC49483"/>
    <property type="gene ID" value="SM_b20958"/>
</dbReference>
<dbReference type="KEGG" id="sme:SM_b20958"/>
<dbReference type="PATRIC" id="fig|266834.11.peg.6011"/>
<dbReference type="eggNOG" id="COG1215">
    <property type="taxonomic scope" value="Bacteria"/>
</dbReference>
<dbReference type="HOGENOM" id="CLU_025996_3_0_5"/>
<dbReference type="OrthoDB" id="6116224at2"/>
<dbReference type="BioCyc" id="MetaCyc:SM_B20958-MONOMER"/>
<dbReference type="UniPathway" id="UPA00631"/>
<dbReference type="Proteomes" id="UP000001976">
    <property type="component" value="Plasmid pSymB"/>
</dbReference>
<dbReference type="GO" id="GO:0005886">
    <property type="term" value="C:plasma membrane"/>
    <property type="evidence" value="ECO:0007669"/>
    <property type="project" value="UniProtKB-SubCell"/>
</dbReference>
<dbReference type="GO" id="GO:0016757">
    <property type="term" value="F:glycosyltransferase activity"/>
    <property type="evidence" value="ECO:0007669"/>
    <property type="project" value="UniProtKB-KW"/>
</dbReference>
<dbReference type="GO" id="GO:0000271">
    <property type="term" value="P:polysaccharide biosynthetic process"/>
    <property type="evidence" value="ECO:0007669"/>
    <property type="project" value="UniProtKB-KW"/>
</dbReference>
<dbReference type="CDD" id="cd00761">
    <property type="entry name" value="Glyco_tranf_GTA_type"/>
    <property type="match status" value="1"/>
</dbReference>
<dbReference type="Gene3D" id="3.90.550.10">
    <property type="entry name" value="Spore Coat Polysaccharide Biosynthesis Protein SpsA, Chain A"/>
    <property type="match status" value="1"/>
</dbReference>
<dbReference type="InterPro" id="IPR001173">
    <property type="entry name" value="Glyco_trans_2-like"/>
</dbReference>
<dbReference type="InterPro" id="IPR029044">
    <property type="entry name" value="Nucleotide-diphossugar_trans"/>
</dbReference>
<dbReference type="PANTHER" id="PTHR43179:SF12">
    <property type="entry name" value="GALACTOFURANOSYLTRANSFERASE GLFT2"/>
    <property type="match status" value="1"/>
</dbReference>
<dbReference type="PANTHER" id="PTHR43179">
    <property type="entry name" value="RHAMNOSYLTRANSFERASE WBBL"/>
    <property type="match status" value="1"/>
</dbReference>
<dbReference type="Pfam" id="PF00535">
    <property type="entry name" value="Glycos_transf_2"/>
    <property type="match status" value="1"/>
</dbReference>
<dbReference type="SUPFAM" id="SSF53448">
    <property type="entry name" value="Nucleotide-diphospho-sugar transferases"/>
    <property type="match status" value="1"/>
</dbReference>
<protein>
    <recommendedName>
        <fullName>Succinoglycan biosynthesis protein ExoM</fullName>
        <ecNumber>2.4.-.-</ecNumber>
    </recommendedName>
</protein>
<feature type="chain" id="PRO_0000059182" description="Succinoglycan biosynthesis protein ExoM">
    <location>
        <begin position="1"/>
        <end position="309"/>
    </location>
</feature>
<feature type="sequence conflict" description="In Ref. 2; CAA80346." evidence="1" ref="2">
    <original>A</original>
    <variation>R</variation>
    <location>
        <position position="169"/>
    </location>
</feature>